<organism>
    <name type="scientific">Glycine max</name>
    <name type="common">Soybean</name>
    <name type="synonym">Glycine hispida</name>
    <dbReference type="NCBI Taxonomy" id="3847"/>
    <lineage>
        <taxon>Eukaryota</taxon>
        <taxon>Viridiplantae</taxon>
        <taxon>Streptophyta</taxon>
        <taxon>Embryophyta</taxon>
        <taxon>Tracheophyta</taxon>
        <taxon>Spermatophyta</taxon>
        <taxon>Magnoliopsida</taxon>
        <taxon>eudicotyledons</taxon>
        <taxon>Gunneridae</taxon>
        <taxon>Pentapetalae</taxon>
        <taxon>rosids</taxon>
        <taxon>fabids</taxon>
        <taxon>Fabales</taxon>
        <taxon>Fabaceae</taxon>
        <taxon>Papilionoideae</taxon>
        <taxon>50 kb inversion clade</taxon>
        <taxon>NPAAA clade</taxon>
        <taxon>indigoferoid/millettioid clade</taxon>
        <taxon>Phaseoleae</taxon>
        <taxon>Glycine</taxon>
        <taxon>Glycine subgen. Soja</taxon>
    </lineage>
</organism>
<protein>
    <recommendedName>
        <fullName evidence="1">Cytochrome b559 subunit beta</fullName>
    </recommendedName>
    <alternativeName>
        <fullName evidence="1">PSII reaction center subunit VI</fullName>
    </alternativeName>
</protein>
<evidence type="ECO:0000255" key="1">
    <source>
        <dbReference type="HAMAP-Rule" id="MF_00643"/>
    </source>
</evidence>
<feature type="chain" id="PRO_0000233651" description="Cytochrome b559 subunit beta">
    <location>
        <begin position="1"/>
        <end position="39"/>
    </location>
</feature>
<feature type="transmembrane region" description="Helical" evidence="1">
    <location>
        <begin position="14"/>
        <end position="30"/>
    </location>
</feature>
<feature type="binding site" description="axial binding residue" evidence="1">
    <location>
        <position position="18"/>
    </location>
    <ligand>
        <name>heme</name>
        <dbReference type="ChEBI" id="CHEBI:30413"/>
        <note>ligand shared with alpha subunit</note>
    </ligand>
    <ligandPart>
        <name>Fe</name>
        <dbReference type="ChEBI" id="CHEBI:18248"/>
    </ligandPart>
</feature>
<keyword id="KW-0150">Chloroplast</keyword>
<keyword id="KW-0249">Electron transport</keyword>
<keyword id="KW-0349">Heme</keyword>
<keyword id="KW-0408">Iron</keyword>
<keyword id="KW-0472">Membrane</keyword>
<keyword id="KW-0479">Metal-binding</keyword>
<keyword id="KW-0602">Photosynthesis</keyword>
<keyword id="KW-0604">Photosystem II</keyword>
<keyword id="KW-0934">Plastid</keyword>
<keyword id="KW-1185">Reference proteome</keyword>
<keyword id="KW-0793">Thylakoid</keyword>
<keyword id="KW-0812">Transmembrane</keyword>
<keyword id="KW-1133">Transmembrane helix</keyword>
<keyword id="KW-0813">Transport</keyword>
<accession>Q2PMR8</accession>
<dbReference type="EMBL" id="DQ317523">
    <property type="protein sequence ID" value="ABC25140.1"/>
    <property type="molecule type" value="Genomic_DNA"/>
</dbReference>
<dbReference type="RefSeq" id="YP_538780.1">
    <property type="nucleotide sequence ID" value="NC_007942.1"/>
</dbReference>
<dbReference type="SMR" id="Q2PMR8"/>
<dbReference type="FunCoup" id="Q2PMR8">
    <property type="interactions" value="80"/>
</dbReference>
<dbReference type="STRING" id="3847.Q2PMR8"/>
<dbReference type="GeneID" id="3989312"/>
<dbReference type="KEGG" id="gmx:3989312"/>
<dbReference type="InParanoid" id="Q2PMR8"/>
<dbReference type="Proteomes" id="UP000008827">
    <property type="component" value="Chloroplast"/>
</dbReference>
<dbReference type="GO" id="GO:0009535">
    <property type="term" value="C:chloroplast thylakoid membrane"/>
    <property type="evidence" value="ECO:0007669"/>
    <property type="project" value="UniProtKB-SubCell"/>
</dbReference>
<dbReference type="GO" id="GO:0009539">
    <property type="term" value="C:photosystem II reaction center"/>
    <property type="evidence" value="ECO:0007669"/>
    <property type="project" value="InterPro"/>
</dbReference>
<dbReference type="GO" id="GO:0009055">
    <property type="term" value="F:electron transfer activity"/>
    <property type="evidence" value="ECO:0007669"/>
    <property type="project" value="UniProtKB-UniRule"/>
</dbReference>
<dbReference type="GO" id="GO:0020037">
    <property type="term" value="F:heme binding"/>
    <property type="evidence" value="ECO:0007669"/>
    <property type="project" value="InterPro"/>
</dbReference>
<dbReference type="GO" id="GO:0005506">
    <property type="term" value="F:iron ion binding"/>
    <property type="evidence" value="ECO:0007669"/>
    <property type="project" value="UniProtKB-UniRule"/>
</dbReference>
<dbReference type="GO" id="GO:0009767">
    <property type="term" value="P:photosynthetic electron transport chain"/>
    <property type="evidence" value="ECO:0007669"/>
    <property type="project" value="InterPro"/>
</dbReference>
<dbReference type="HAMAP" id="MF_00643">
    <property type="entry name" value="PSII_PsbF"/>
    <property type="match status" value="1"/>
</dbReference>
<dbReference type="InterPro" id="IPR006241">
    <property type="entry name" value="PSII_cyt_b559_bsu"/>
</dbReference>
<dbReference type="InterPro" id="IPR006216">
    <property type="entry name" value="PSII_cyt_b559_CS"/>
</dbReference>
<dbReference type="InterPro" id="IPR013081">
    <property type="entry name" value="PSII_cyt_b559_N"/>
</dbReference>
<dbReference type="NCBIfam" id="TIGR01333">
    <property type="entry name" value="cyt_b559_beta"/>
    <property type="match status" value="1"/>
</dbReference>
<dbReference type="Pfam" id="PF00283">
    <property type="entry name" value="Cytochrom_B559"/>
    <property type="match status" value="1"/>
</dbReference>
<dbReference type="PIRSF" id="PIRSF000037">
    <property type="entry name" value="PsbF"/>
    <property type="match status" value="1"/>
</dbReference>
<dbReference type="SUPFAM" id="SSF161045">
    <property type="entry name" value="Cytochrome b559 subunits"/>
    <property type="match status" value="1"/>
</dbReference>
<dbReference type="PROSITE" id="PS00537">
    <property type="entry name" value="CYTOCHROME_B559"/>
    <property type="match status" value="1"/>
</dbReference>
<geneLocation type="chloroplast"/>
<comment type="function">
    <text evidence="1">This b-type cytochrome is tightly associated with the reaction center of photosystem II (PSII). PSII is a light-driven water:plastoquinone oxidoreductase that uses light energy to abstract electrons from H(2)O, generating O(2) and a proton gradient subsequently used for ATP formation. It consists of a core antenna complex that captures photons, and an electron transfer chain that converts photonic excitation into a charge separation.</text>
</comment>
<comment type="cofactor">
    <cofactor evidence="1">
        <name>heme b</name>
        <dbReference type="ChEBI" id="CHEBI:60344"/>
    </cofactor>
    <text evidence="1">With its partner (PsbE) binds heme. PSII binds additional chlorophylls, carotenoids and specific lipids.</text>
</comment>
<comment type="subunit">
    <text evidence="1">Heterodimer of an alpha subunit and a beta subunit. PSII is composed of 1 copy each of membrane proteins PsbA, PsbB, PsbC, PsbD, PsbE, PsbF, PsbH, PsbI, PsbJ, PsbK, PsbL, PsbM, PsbT, PsbX, PsbY, PsbZ, Psb30/Ycf12, at least 3 peripheral proteins of the oxygen-evolving complex and a large number of cofactors. It forms dimeric complexes.</text>
</comment>
<comment type="subcellular location">
    <subcellularLocation>
        <location evidence="1">Plastid</location>
        <location evidence="1">Chloroplast thylakoid membrane</location>
        <topology evidence="1">Single-pass membrane protein</topology>
    </subcellularLocation>
</comment>
<comment type="similarity">
    <text evidence="1">Belongs to the PsbE/PsbF family.</text>
</comment>
<gene>
    <name evidence="1" type="primary">psbF</name>
</gene>
<proteinExistence type="inferred from homology"/>
<sequence length="39" mass="4424">MTIDRTYPIFTVRWLAVHGLAVPTVSFLGSISAMQFIQR</sequence>
<name>PSBF_SOYBN</name>
<reference key="1">
    <citation type="journal article" date="2005" name="Plant Mol. Biol.">
        <title>Complete chloroplast genome sequence of Glycine max and comparative analyses with other legume genomes.</title>
        <authorList>
            <person name="Saski C."/>
            <person name="Lee S.-B."/>
            <person name="Daniell H."/>
            <person name="Wood T.C."/>
            <person name="Tomkins J."/>
            <person name="Kim H.-G."/>
            <person name="Jansen R.K."/>
        </authorList>
    </citation>
    <scope>NUCLEOTIDE SEQUENCE [LARGE SCALE GENOMIC DNA]</scope>
    <source>
        <strain>cv. PI 437654</strain>
    </source>
</reference>